<sequence>MNRTPSLHTKEKKGFIDMHTMWKGSISFGLVNIPIKLYAATEDKDIKLRSLHKEDHAPIKYEKVCTNCEKTLSPDEIVKGYEYVKGKYVVLTDEDLKSLKQEHEEKAVEIVDFVQLQEIDPIYFNRSYFVGPGDNGTKAYTLLREALRSTGKIGIANMTIRSKQQLAILRVYENCIVMESIHYPDEVRSAAQVPGVPDQSNVNDKELQTAITLIDELTAKFEPEKYEDTYRQALLQRVNDKLENKETAVTPDKAPPREDVIDLVSALQASIDRTRRPNRETPAAAPAQAAEPKGAGDKKQKTTRKKASGTS</sequence>
<protein>
    <recommendedName>
        <fullName evidence="1">Non-homologous end joining protein Ku</fullName>
    </recommendedName>
</protein>
<name>KU_BACSU</name>
<proteinExistence type="evidence at transcript level"/>
<feature type="chain" id="PRO_0000389176" description="Non-homologous end joining protein Ku">
    <location>
        <begin position="1"/>
        <end position="311"/>
    </location>
</feature>
<feature type="domain" description="Ku" evidence="1">
    <location>
        <begin position="26"/>
        <end position="210"/>
    </location>
</feature>
<feature type="region of interest" description="Disordered" evidence="2">
    <location>
        <begin position="269"/>
        <end position="311"/>
    </location>
</feature>
<feature type="compositionally biased region" description="Low complexity" evidence="2">
    <location>
        <begin position="282"/>
        <end position="293"/>
    </location>
</feature>
<feature type="compositionally biased region" description="Basic residues" evidence="2">
    <location>
        <begin position="301"/>
        <end position="311"/>
    </location>
</feature>
<evidence type="ECO:0000255" key="1">
    <source>
        <dbReference type="HAMAP-Rule" id="MF_01875"/>
    </source>
</evidence>
<evidence type="ECO:0000256" key="2">
    <source>
        <dbReference type="SAM" id="MobiDB-lite"/>
    </source>
</evidence>
<evidence type="ECO:0000269" key="3">
    <source>
    </source>
</evidence>
<evidence type="ECO:0000269" key="4">
    <source>
    </source>
</evidence>
<evidence type="ECO:0000269" key="5">
    <source>
    </source>
</evidence>
<keyword id="KW-0227">DNA damage</keyword>
<keyword id="KW-0233">DNA recombination</keyword>
<keyword id="KW-0234">DNA repair</keyword>
<keyword id="KW-0238">DNA-binding</keyword>
<keyword id="KW-1185">Reference proteome</keyword>
<reference key="1">
    <citation type="journal article" date="1997" name="Nature">
        <title>The complete genome sequence of the Gram-positive bacterium Bacillus subtilis.</title>
        <authorList>
            <person name="Kunst F."/>
            <person name="Ogasawara N."/>
            <person name="Moszer I."/>
            <person name="Albertini A.M."/>
            <person name="Alloni G."/>
            <person name="Azevedo V."/>
            <person name="Bertero M.G."/>
            <person name="Bessieres P."/>
            <person name="Bolotin A."/>
            <person name="Borchert S."/>
            <person name="Borriss R."/>
            <person name="Boursier L."/>
            <person name="Brans A."/>
            <person name="Braun M."/>
            <person name="Brignell S.C."/>
            <person name="Bron S."/>
            <person name="Brouillet S."/>
            <person name="Bruschi C.V."/>
            <person name="Caldwell B."/>
            <person name="Capuano V."/>
            <person name="Carter N.M."/>
            <person name="Choi S.-K."/>
            <person name="Codani J.-J."/>
            <person name="Connerton I.F."/>
            <person name="Cummings N.J."/>
            <person name="Daniel R.A."/>
            <person name="Denizot F."/>
            <person name="Devine K.M."/>
            <person name="Duesterhoeft A."/>
            <person name="Ehrlich S.D."/>
            <person name="Emmerson P.T."/>
            <person name="Entian K.-D."/>
            <person name="Errington J."/>
            <person name="Fabret C."/>
            <person name="Ferrari E."/>
            <person name="Foulger D."/>
            <person name="Fritz C."/>
            <person name="Fujita M."/>
            <person name="Fujita Y."/>
            <person name="Fuma S."/>
            <person name="Galizzi A."/>
            <person name="Galleron N."/>
            <person name="Ghim S.-Y."/>
            <person name="Glaser P."/>
            <person name="Goffeau A."/>
            <person name="Golightly E.J."/>
            <person name="Grandi G."/>
            <person name="Guiseppi G."/>
            <person name="Guy B.J."/>
            <person name="Haga K."/>
            <person name="Haiech J."/>
            <person name="Harwood C.R."/>
            <person name="Henaut A."/>
            <person name="Hilbert H."/>
            <person name="Holsappel S."/>
            <person name="Hosono S."/>
            <person name="Hullo M.-F."/>
            <person name="Itaya M."/>
            <person name="Jones L.-M."/>
            <person name="Joris B."/>
            <person name="Karamata D."/>
            <person name="Kasahara Y."/>
            <person name="Klaerr-Blanchard M."/>
            <person name="Klein C."/>
            <person name="Kobayashi Y."/>
            <person name="Koetter P."/>
            <person name="Koningstein G."/>
            <person name="Krogh S."/>
            <person name="Kumano M."/>
            <person name="Kurita K."/>
            <person name="Lapidus A."/>
            <person name="Lardinois S."/>
            <person name="Lauber J."/>
            <person name="Lazarevic V."/>
            <person name="Lee S.-M."/>
            <person name="Levine A."/>
            <person name="Liu H."/>
            <person name="Masuda S."/>
            <person name="Mauel C."/>
            <person name="Medigue C."/>
            <person name="Medina N."/>
            <person name="Mellado R.P."/>
            <person name="Mizuno M."/>
            <person name="Moestl D."/>
            <person name="Nakai S."/>
            <person name="Noback M."/>
            <person name="Noone D."/>
            <person name="O'Reilly M."/>
            <person name="Ogawa K."/>
            <person name="Ogiwara A."/>
            <person name="Oudega B."/>
            <person name="Park S.-H."/>
            <person name="Parro V."/>
            <person name="Pohl T.M."/>
            <person name="Portetelle D."/>
            <person name="Porwollik S."/>
            <person name="Prescott A.M."/>
            <person name="Presecan E."/>
            <person name="Pujic P."/>
            <person name="Purnelle B."/>
            <person name="Rapoport G."/>
            <person name="Rey M."/>
            <person name="Reynolds S."/>
            <person name="Rieger M."/>
            <person name="Rivolta C."/>
            <person name="Rocha E."/>
            <person name="Roche B."/>
            <person name="Rose M."/>
            <person name="Sadaie Y."/>
            <person name="Sato T."/>
            <person name="Scanlan E."/>
            <person name="Schleich S."/>
            <person name="Schroeter R."/>
            <person name="Scoffone F."/>
            <person name="Sekiguchi J."/>
            <person name="Sekowska A."/>
            <person name="Seror S.J."/>
            <person name="Serror P."/>
            <person name="Shin B.-S."/>
            <person name="Soldo B."/>
            <person name="Sorokin A."/>
            <person name="Tacconi E."/>
            <person name="Takagi T."/>
            <person name="Takahashi H."/>
            <person name="Takemaru K."/>
            <person name="Takeuchi M."/>
            <person name="Tamakoshi A."/>
            <person name="Tanaka T."/>
            <person name="Terpstra P."/>
            <person name="Tognoni A."/>
            <person name="Tosato V."/>
            <person name="Uchiyama S."/>
            <person name="Vandenbol M."/>
            <person name="Vannier F."/>
            <person name="Vassarotti A."/>
            <person name="Viari A."/>
            <person name="Wambutt R."/>
            <person name="Wedler E."/>
            <person name="Wedler H."/>
            <person name="Weitzenegger T."/>
            <person name="Winters P."/>
            <person name="Wipat A."/>
            <person name="Yamamoto H."/>
            <person name="Yamane K."/>
            <person name="Yasumoto K."/>
            <person name="Yata K."/>
            <person name="Yoshida K."/>
            <person name="Yoshikawa H.-F."/>
            <person name="Zumstein E."/>
            <person name="Yoshikawa H."/>
            <person name="Danchin A."/>
        </authorList>
    </citation>
    <scope>NUCLEOTIDE SEQUENCE [LARGE SCALE GENOMIC DNA]</scope>
    <source>
        <strain>168</strain>
    </source>
</reference>
<reference key="2">
    <citation type="journal article" date="2001" name="FEBS Lett.">
        <title>Identification of bacterial homologues of the Ku DNA repair proteins.</title>
        <authorList>
            <person name="Doherty A.J."/>
            <person name="Jackson S.P."/>
            <person name="Weller G.R."/>
        </authorList>
    </citation>
    <scope>PRELIMINARY FUNCTION</scope>
    <scope>SIMILARITY</scope>
</reference>
<reference key="3">
    <citation type="journal article" date="2002" name="Science">
        <title>Identification of a DNA nonhomologous end-joining complex in bacteria.</title>
        <authorList>
            <person name="Weller G.R."/>
            <person name="Kysela B."/>
            <person name="Roy R."/>
            <person name="Tonkin L.M."/>
            <person name="Scanlan E."/>
            <person name="Della M."/>
            <person name="Devine S.K."/>
            <person name="Day J.P."/>
            <person name="Wilkinson A."/>
            <person name="d'Adda di Fagagna F."/>
            <person name="Devine K.M."/>
            <person name="Bowater R.P."/>
            <person name="Jeggo P.A."/>
            <person name="Jackson S.P."/>
            <person name="Doherty A.J."/>
        </authorList>
    </citation>
    <scope>DISRUPTION PHENOTYPE</scope>
    <source>
        <strain>168</strain>
    </source>
</reference>
<reference key="4">
    <citation type="journal article" date="2006" name="J. Mol. Biol.">
        <title>The forespore line of gene expression in Bacillus subtilis.</title>
        <authorList>
            <person name="Wang S.T."/>
            <person name="Setlow B."/>
            <person name="Conlon E.M."/>
            <person name="Lyon J.L."/>
            <person name="Imamura D."/>
            <person name="Sato T."/>
            <person name="Setlow P."/>
            <person name="Losick R."/>
            <person name="Eichenberger P."/>
        </authorList>
    </citation>
    <scope>FUNCTION</scope>
    <scope>SUBCELLULAR LOCATION</scope>
    <scope>DEVELOPMENTAL STAGE</scope>
    <scope>INDUCTION</scope>
    <scope>DISRUPTION PHENOTYPE</scope>
    <source>
        <strain>168 / PY79</strain>
    </source>
</reference>
<reference key="5">
    <citation type="journal article" date="2007" name="J. Bacteriol.">
        <title>Role of DNA repair by nonhomologous-end joining in Bacillus subtilis spore resistance to extreme dryness, mono- and polychromatic UV, and ionizing radiation.</title>
        <authorList>
            <person name="Moeller R."/>
            <person name="Stackebrandt E."/>
            <person name="Reitz G."/>
            <person name="Berger T."/>
            <person name="Rettberg P."/>
            <person name="Doherty A.J."/>
            <person name="Horneck G."/>
            <person name="Nicholson W.L."/>
        </authorList>
    </citation>
    <scope>DISRUPTION PHENOTYPE</scope>
    <source>
        <strain>168</strain>
    </source>
</reference>
<dbReference type="EMBL" id="AL009126">
    <property type="protein sequence ID" value="CAB13198.1"/>
    <property type="molecule type" value="Genomic_DNA"/>
</dbReference>
<dbReference type="PIR" id="H69860">
    <property type="entry name" value="H69860"/>
</dbReference>
<dbReference type="RefSeq" id="WP_010886496.1">
    <property type="nucleotide sequence ID" value="NZ_OZ025638.1"/>
</dbReference>
<dbReference type="SMR" id="O34859"/>
<dbReference type="FunCoup" id="O34859">
    <property type="interactions" value="25"/>
</dbReference>
<dbReference type="STRING" id="224308.BSU13410"/>
<dbReference type="PaxDb" id="224308-BSU13410"/>
<dbReference type="DNASU" id="939375"/>
<dbReference type="EnsemblBacteria" id="CAB13198">
    <property type="protein sequence ID" value="CAB13198"/>
    <property type="gene ID" value="BSU_13410"/>
</dbReference>
<dbReference type="GeneID" id="939375"/>
<dbReference type="KEGG" id="bsu:BSU13410"/>
<dbReference type="PATRIC" id="fig|224308.43.peg.1414"/>
<dbReference type="eggNOG" id="COG1273">
    <property type="taxonomic scope" value="Bacteria"/>
</dbReference>
<dbReference type="InParanoid" id="O34859"/>
<dbReference type="OrthoDB" id="9795084at2"/>
<dbReference type="PhylomeDB" id="O34859"/>
<dbReference type="BioCyc" id="BSUB:BSU13410-MONOMER"/>
<dbReference type="Proteomes" id="UP000001570">
    <property type="component" value="Chromosome"/>
</dbReference>
<dbReference type="GO" id="GO:0003690">
    <property type="term" value="F:double-stranded DNA binding"/>
    <property type="evidence" value="ECO:0000318"/>
    <property type="project" value="GO_Central"/>
</dbReference>
<dbReference type="GO" id="GO:0006310">
    <property type="term" value="P:DNA recombination"/>
    <property type="evidence" value="ECO:0007669"/>
    <property type="project" value="UniProtKB-KW"/>
</dbReference>
<dbReference type="GO" id="GO:0006303">
    <property type="term" value="P:double-strand break repair via nonhomologous end joining"/>
    <property type="evidence" value="ECO:0007669"/>
    <property type="project" value="UniProtKB-UniRule"/>
</dbReference>
<dbReference type="CDD" id="cd00789">
    <property type="entry name" value="KU_like"/>
    <property type="match status" value="1"/>
</dbReference>
<dbReference type="FunFam" id="2.40.290.10:FF:000004">
    <property type="entry name" value="Non-homologous end joining protein Ku"/>
    <property type="match status" value="1"/>
</dbReference>
<dbReference type="Gene3D" id="2.40.290.10">
    <property type="match status" value="1"/>
</dbReference>
<dbReference type="HAMAP" id="MF_01875">
    <property type="entry name" value="Prokaryotic_Ku"/>
    <property type="match status" value="1"/>
</dbReference>
<dbReference type="InterPro" id="IPR006164">
    <property type="entry name" value="Ku70/Ku80_beta-barrel_dom"/>
</dbReference>
<dbReference type="InterPro" id="IPR009187">
    <property type="entry name" value="Prok_Ku"/>
</dbReference>
<dbReference type="InterPro" id="IPR016194">
    <property type="entry name" value="SPOC-like_C_dom_sf"/>
</dbReference>
<dbReference type="NCBIfam" id="TIGR02772">
    <property type="entry name" value="Ku_bact"/>
    <property type="match status" value="1"/>
</dbReference>
<dbReference type="PANTHER" id="PTHR41251">
    <property type="entry name" value="NON-HOMOLOGOUS END JOINING PROTEIN KU"/>
    <property type="match status" value="1"/>
</dbReference>
<dbReference type="PANTHER" id="PTHR41251:SF1">
    <property type="entry name" value="NON-HOMOLOGOUS END JOINING PROTEIN KU"/>
    <property type="match status" value="1"/>
</dbReference>
<dbReference type="Pfam" id="PF02735">
    <property type="entry name" value="Ku"/>
    <property type="match status" value="1"/>
</dbReference>
<dbReference type="PIRSF" id="PIRSF006493">
    <property type="entry name" value="Prok_Ku"/>
    <property type="match status" value="1"/>
</dbReference>
<dbReference type="SMART" id="SM00559">
    <property type="entry name" value="Ku78"/>
    <property type="match status" value="1"/>
</dbReference>
<dbReference type="SUPFAM" id="SSF100939">
    <property type="entry name" value="SPOC domain-like"/>
    <property type="match status" value="1"/>
</dbReference>
<organism>
    <name type="scientific">Bacillus subtilis (strain 168)</name>
    <dbReference type="NCBI Taxonomy" id="224308"/>
    <lineage>
        <taxon>Bacteria</taxon>
        <taxon>Bacillati</taxon>
        <taxon>Bacillota</taxon>
        <taxon>Bacilli</taxon>
        <taxon>Bacillales</taxon>
        <taxon>Bacillaceae</taxon>
        <taxon>Bacillus</taxon>
    </lineage>
</organism>
<gene>
    <name evidence="1" type="primary">ku</name>
    <name type="synonym">ykoV</name>
    <name type="ordered locus">BSU13410</name>
</gene>
<accession>O34859</accession>
<comment type="function">
    <text evidence="1 4">With LigD forms a non-homologous end joining (NHEJ) DNA repair enzyme, which repairs dsDNA breaks with reduced fidelity. Binds linear dsDNA with 5'- and 3'- overhangs but not closed circular dsDNA nor ssDNA. Recruits and stimulates the ligase activity of LigD (By similarity). Probably involved in DNA repair during spore germination.</text>
</comment>
<comment type="subunit">
    <text evidence="1">Homodimer. Interacts with LigD.</text>
</comment>
<comment type="subcellular location">
    <subcellularLocation>
        <location evidence="4">Spore core</location>
    </subcellularLocation>
    <text>Expressed in the center of the spore core, presumably with the nucleoid.</text>
</comment>
<comment type="developmental stage">
    <text evidence="4">Expressed in sporulating cells. Disappears after 90 minutes of spore germination.</text>
</comment>
<comment type="induction">
    <text evidence="4">Transcriptionally regulated by SpoVT and sigma-G factor.</text>
</comment>
<comment type="disruption phenotype">
    <text evidence="3 4 5">Stationary-phase cells lacking this gene are more sensitive to ionizing radiation. Growth rate, ultraviolet light and methyl-methanesulfonate sensitivities are unaffected. The spores formed are significantly more sensitive to dry heat, high vacuum-induced desiccation, X-rays and UV radiation, but no difference in hydrogen peroxide resistance exists.</text>
</comment>
<comment type="similarity">
    <text evidence="1">Belongs to the prokaryotic Ku family.</text>
</comment>